<keyword id="KW-0343">GTPase activation</keyword>
<keyword id="KW-1185">Reference proteome</keyword>
<keyword id="KW-0677">Repeat</keyword>
<reference key="1">
    <citation type="journal article" date="2005" name="Science">
        <title>The transcriptional landscape of the mammalian genome.</title>
        <authorList>
            <person name="Carninci P."/>
            <person name="Kasukawa T."/>
            <person name="Katayama S."/>
            <person name="Gough J."/>
            <person name="Frith M.C."/>
            <person name="Maeda N."/>
            <person name="Oyama R."/>
            <person name="Ravasi T."/>
            <person name="Lenhard B."/>
            <person name="Wells C."/>
            <person name="Kodzius R."/>
            <person name="Shimokawa K."/>
            <person name="Bajic V.B."/>
            <person name="Brenner S.E."/>
            <person name="Batalov S."/>
            <person name="Forrest A.R."/>
            <person name="Zavolan M."/>
            <person name="Davis M.J."/>
            <person name="Wilming L.G."/>
            <person name="Aidinis V."/>
            <person name="Allen J.E."/>
            <person name="Ambesi-Impiombato A."/>
            <person name="Apweiler R."/>
            <person name="Aturaliya R.N."/>
            <person name="Bailey T.L."/>
            <person name="Bansal M."/>
            <person name="Baxter L."/>
            <person name="Beisel K.W."/>
            <person name="Bersano T."/>
            <person name="Bono H."/>
            <person name="Chalk A.M."/>
            <person name="Chiu K.P."/>
            <person name="Choudhary V."/>
            <person name="Christoffels A."/>
            <person name="Clutterbuck D.R."/>
            <person name="Crowe M.L."/>
            <person name="Dalla E."/>
            <person name="Dalrymple B.P."/>
            <person name="de Bono B."/>
            <person name="Della Gatta G."/>
            <person name="di Bernardo D."/>
            <person name="Down T."/>
            <person name="Engstrom P."/>
            <person name="Fagiolini M."/>
            <person name="Faulkner G."/>
            <person name="Fletcher C.F."/>
            <person name="Fukushima T."/>
            <person name="Furuno M."/>
            <person name="Futaki S."/>
            <person name="Gariboldi M."/>
            <person name="Georgii-Hemming P."/>
            <person name="Gingeras T.R."/>
            <person name="Gojobori T."/>
            <person name="Green R.E."/>
            <person name="Gustincich S."/>
            <person name="Harbers M."/>
            <person name="Hayashi Y."/>
            <person name="Hensch T.K."/>
            <person name="Hirokawa N."/>
            <person name="Hill D."/>
            <person name="Huminiecki L."/>
            <person name="Iacono M."/>
            <person name="Ikeo K."/>
            <person name="Iwama A."/>
            <person name="Ishikawa T."/>
            <person name="Jakt M."/>
            <person name="Kanapin A."/>
            <person name="Katoh M."/>
            <person name="Kawasawa Y."/>
            <person name="Kelso J."/>
            <person name="Kitamura H."/>
            <person name="Kitano H."/>
            <person name="Kollias G."/>
            <person name="Krishnan S.P."/>
            <person name="Kruger A."/>
            <person name="Kummerfeld S.K."/>
            <person name="Kurochkin I.V."/>
            <person name="Lareau L.F."/>
            <person name="Lazarevic D."/>
            <person name="Lipovich L."/>
            <person name="Liu J."/>
            <person name="Liuni S."/>
            <person name="McWilliam S."/>
            <person name="Madan Babu M."/>
            <person name="Madera M."/>
            <person name="Marchionni L."/>
            <person name="Matsuda H."/>
            <person name="Matsuzawa S."/>
            <person name="Miki H."/>
            <person name="Mignone F."/>
            <person name="Miyake S."/>
            <person name="Morris K."/>
            <person name="Mottagui-Tabar S."/>
            <person name="Mulder N."/>
            <person name="Nakano N."/>
            <person name="Nakauchi H."/>
            <person name="Ng P."/>
            <person name="Nilsson R."/>
            <person name="Nishiguchi S."/>
            <person name="Nishikawa S."/>
            <person name="Nori F."/>
            <person name="Ohara O."/>
            <person name="Okazaki Y."/>
            <person name="Orlando V."/>
            <person name="Pang K.C."/>
            <person name="Pavan W.J."/>
            <person name="Pavesi G."/>
            <person name="Pesole G."/>
            <person name="Petrovsky N."/>
            <person name="Piazza S."/>
            <person name="Reed J."/>
            <person name="Reid J.F."/>
            <person name="Ring B.Z."/>
            <person name="Ringwald M."/>
            <person name="Rost B."/>
            <person name="Ruan Y."/>
            <person name="Salzberg S.L."/>
            <person name="Sandelin A."/>
            <person name="Schneider C."/>
            <person name="Schoenbach C."/>
            <person name="Sekiguchi K."/>
            <person name="Semple C.A."/>
            <person name="Seno S."/>
            <person name="Sessa L."/>
            <person name="Sheng Y."/>
            <person name="Shibata Y."/>
            <person name="Shimada H."/>
            <person name="Shimada K."/>
            <person name="Silva D."/>
            <person name="Sinclair B."/>
            <person name="Sperling S."/>
            <person name="Stupka E."/>
            <person name="Sugiura K."/>
            <person name="Sultana R."/>
            <person name="Takenaka Y."/>
            <person name="Taki K."/>
            <person name="Tammoja K."/>
            <person name="Tan S.L."/>
            <person name="Tang S."/>
            <person name="Taylor M.S."/>
            <person name="Tegner J."/>
            <person name="Teichmann S.A."/>
            <person name="Ueda H.R."/>
            <person name="van Nimwegen E."/>
            <person name="Verardo R."/>
            <person name="Wei C.L."/>
            <person name="Yagi K."/>
            <person name="Yamanishi H."/>
            <person name="Zabarovsky E."/>
            <person name="Zhu S."/>
            <person name="Zimmer A."/>
            <person name="Hide W."/>
            <person name="Bult C."/>
            <person name="Grimmond S.M."/>
            <person name="Teasdale R.D."/>
            <person name="Liu E.T."/>
            <person name="Brusic V."/>
            <person name="Quackenbush J."/>
            <person name="Wahlestedt C."/>
            <person name="Mattick J.S."/>
            <person name="Hume D.A."/>
            <person name="Kai C."/>
            <person name="Sasaki D."/>
            <person name="Tomaru Y."/>
            <person name="Fukuda S."/>
            <person name="Kanamori-Katayama M."/>
            <person name="Suzuki M."/>
            <person name="Aoki J."/>
            <person name="Arakawa T."/>
            <person name="Iida J."/>
            <person name="Imamura K."/>
            <person name="Itoh M."/>
            <person name="Kato T."/>
            <person name="Kawaji H."/>
            <person name="Kawagashira N."/>
            <person name="Kawashima T."/>
            <person name="Kojima M."/>
            <person name="Kondo S."/>
            <person name="Konno H."/>
            <person name="Nakano K."/>
            <person name="Ninomiya N."/>
            <person name="Nishio T."/>
            <person name="Okada M."/>
            <person name="Plessy C."/>
            <person name="Shibata K."/>
            <person name="Shiraki T."/>
            <person name="Suzuki S."/>
            <person name="Tagami M."/>
            <person name="Waki K."/>
            <person name="Watahiki A."/>
            <person name="Okamura-Oho Y."/>
            <person name="Suzuki H."/>
            <person name="Kawai J."/>
            <person name="Hayashizaki Y."/>
        </authorList>
    </citation>
    <scope>NUCLEOTIDE SEQUENCE [LARGE SCALE MRNA]</scope>
    <source>
        <strain>C57BL/6J</strain>
        <tissue>Epididymis</tissue>
        <tissue>Hippocampus</tissue>
        <tissue>Spinal cord</tissue>
    </source>
</reference>
<reference key="2">
    <citation type="submission" date="2005-07" db="EMBL/GenBank/DDBJ databases">
        <authorList>
            <person name="Mural R.J."/>
            <person name="Adams M.D."/>
            <person name="Myers E.W."/>
            <person name="Smith H.O."/>
            <person name="Venter J.C."/>
        </authorList>
    </citation>
    <scope>NUCLEOTIDE SEQUENCE [LARGE SCALE GENOMIC DNA]</scope>
</reference>
<reference key="3">
    <citation type="journal article" date="2004" name="Genome Res.">
        <title>The status, quality, and expansion of the NIH full-length cDNA project: the Mammalian Gene Collection (MGC).</title>
        <authorList>
            <consortium name="The MGC Project Team"/>
        </authorList>
    </citation>
    <scope>NUCLEOTIDE SEQUENCE [LARGE SCALE MRNA]</scope>
    <source>
        <strain>C57BL/6J</strain>
        <strain>FVB/N</strain>
        <tissue>Fetal brain</tissue>
        <tissue>Mammary tumor</tissue>
    </source>
</reference>
<reference key="4">
    <citation type="submission" date="1997-02" db="EMBL/GenBank/DDBJ databases">
        <title>The CHESS protein domain: a novel structural unit that is common among networks involved in cell signaling, chromatin metabolism and cell division.</title>
        <authorList>
            <person name="Guimaraes M.J."/>
            <person name="Bazan J.F."/>
        </authorList>
    </citation>
    <scope>NUCLEOTIDE SEQUENCE [MRNA] OF 201-1134</scope>
    <source>
        <tissue>Hematopoietic</tissue>
    </source>
</reference>
<reference key="5">
    <citation type="journal article" date="2010" name="Cell">
        <title>A tissue-specific atlas of mouse protein phosphorylation and expression.</title>
        <authorList>
            <person name="Huttlin E.L."/>
            <person name="Jedrychowski M.P."/>
            <person name="Elias J.E."/>
            <person name="Goswami T."/>
            <person name="Rad R."/>
            <person name="Beausoleil S.A."/>
            <person name="Villen J."/>
            <person name="Haas W."/>
            <person name="Sowa M.E."/>
            <person name="Gygi S.P."/>
        </authorList>
    </citation>
    <scope>IDENTIFICATION BY MASS SPECTROMETRY [LARGE SCALE ANALYSIS]</scope>
    <source>
        <tissue>Testis</tissue>
    </source>
</reference>
<sequence>MWLKPEEVLLKNALKLWVTQKSSCYFVLQRRRGHGEGGGRLTGRLVGALDAVLDSSARVAPFRILLQVPGSQVYSPIACGATLEEINRHWDWLEQNLLHTLSVFDNKDDIASFVKGKVKALIAEETSSRLAEQEEEPEKFREALVKFEARFNFPEAEKLVTYYSCCCWKGRVPRQGWLYLSINHLCFYSFFLGKELKLVIPWVDIQKLERTSNVFLTDTIRITTQNKERDFSTFLNLDEVFKIMEQLADVTLRRLLDNEVFDLDPDLQEPSQITKRDLEARAQNEFFRAFFRLPREEKLHAVADCSLWTPFSRCHTAGRIFSSDSYICFASREDGCCNVVLPLREVVSIEKMEDTSLLPNPIIVSIRSKMAFQFIELKDRENLVEGLLLRLKQVHANHPVHYETSPSDDDMASPVFYSASICTDKFGDLEMVASQSSEEREEKRPLPHPEPLTAVFQQSGSQSPDSRLSREQIKISLWNDHFVEYGRTVCMFRTEKIRKLVAMGIPESLRGRLWLLFSDAVTDLASHPGYYGNLVEQSLGRCCLVTEEIERDLHRSLPEHPAFQNETGIAALRRVLTAYAHRNPKIGYCQSMNILTSVLLLYAKEEEAFWLLVAVCERMLPDYFNHRVIGAQVDQSVFEELIKEQLPELAEHMSDLSALASISLSWFLTLFLSIMPLESAVHVVDCFFYDGIKAIFQLGLAVLEANAEELCSSKDDGQALMVLSRFLDHIKNEDSPGPPIGSHHAFFSDDQEPYPVTDIADLIRDSYEKFGNQSVEQIEHLRCKHRIRVLQGHEDTTKQNVLRVVIPEVSILPEDLEELYDLFKRAHMMSCYWEHHRPMALRHDPSRPYAEQYRIDARQFAHLFQLVSPWTCGVHTEILAERLFRLLDDNMDQLIEFKAFTSCLDIMYNGEMNEKIKLLYRLHIPPALTENDRDSQSPLKNPLLSTSRPLVLGKPNGDTIDYQKQLKQMIKDLAKEKDKMEKELPKMSQREFIQFCKTLYSMFHEDPEENDLYQAIATVTTLLLQIGEVGQRGSSSGSCSQECEEPQASAPPEQDSVFAEAGKSPQAFPETEGDWTVSLEHILASLLTEQSLVNFFEKPLNIKSKLENAKLNQYSLKVLEMSHPPQAELKLNDL</sequence>
<name>TBCD8_MOUSE</name>
<comment type="function">
    <text>May act as a GTPase-activating protein for Rab family protein(s).</text>
</comment>
<comment type="domain">
    <text evidence="1">The arginine and glutamine fingers are critical for the GTPase-activating mechanism, they pull out Rab's 'switch 2' glutamine and insert in Rab's active site.</text>
</comment>
<comment type="sequence caution" evidence="4">
    <conflict type="erroneous initiation">
        <sequence resource="EMBL-CDS" id="AAD00658"/>
    </conflict>
    <text>Truncated N-terminus.</text>
</comment>
<comment type="sequence caution" evidence="4">
    <conflict type="erroneous initiation">
        <sequence resource="EMBL-CDS" id="AAH05421"/>
    </conflict>
    <text>Extended N-terminus.</text>
</comment>
<dbReference type="EMBL" id="AK138630">
    <property type="protein sequence ID" value="BAE23728.1"/>
    <property type="molecule type" value="mRNA"/>
</dbReference>
<dbReference type="EMBL" id="AK141520">
    <property type="protein sequence ID" value="BAE24715.1"/>
    <property type="molecule type" value="mRNA"/>
</dbReference>
<dbReference type="EMBL" id="AK162371">
    <property type="protein sequence ID" value="BAE36878.1"/>
    <property type="molecule type" value="mRNA"/>
</dbReference>
<dbReference type="EMBL" id="CH466536">
    <property type="protein sequence ID" value="EDL14558.1"/>
    <property type="molecule type" value="Genomic_DNA"/>
</dbReference>
<dbReference type="EMBL" id="BC065081">
    <property type="protein sequence ID" value="AAH65081.1"/>
    <property type="molecule type" value="mRNA"/>
</dbReference>
<dbReference type="EMBL" id="BC005421">
    <property type="protein sequence ID" value="AAH05421.2"/>
    <property type="status" value="ALT_INIT"/>
    <property type="molecule type" value="mRNA"/>
</dbReference>
<dbReference type="EMBL" id="U88873">
    <property type="protein sequence ID" value="AAD00658.1"/>
    <property type="status" value="ALT_INIT"/>
    <property type="molecule type" value="mRNA"/>
</dbReference>
<dbReference type="CCDS" id="CCDS14905.1"/>
<dbReference type="RefSeq" id="NP_061245.3">
    <property type="nucleotide sequence ID" value="NM_018775.4"/>
</dbReference>
<dbReference type="SMR" id="Q9Z1A9"/>
<dbReference type="BioGRID" id="207685">
    <property type="interactions" value="2"/>
</dbReference>
<dbReference type="FunCoup" id="Q9Z1A9">
    <property type="interactions" value="2240"/>
</dbReference>
<dbReference type="STRING" id="10090.ENSMUSP00000049967"/>
<dbReference type="iPTMnet" id="Q9Z1A9"/>
<dbReference type="PhosphoSitePlus" id="Q9Z1A9"/>
<dbReference type="PaxDb" id="10090-ENSMUSP00000049967"/>
<dbReference type="ProteomicsDB" id="254827"/>
<dbReference type="Antibodypedia" id="32896">
    <property type="antibodies" value="82 antibodies from 17 providers"/>
</dbReference>
<dbReference type="DNASU" id="54610"/>
<dbReference type="Ensembl" id="ENSMUST00000054462.11">
    <property type="protein sequence ID" value="ENSMUSP00000049967.6"/>
    <property type="gene ID" value="ENSMUSG00000003134.11"/>
</dbReference>
<dbReference type="GeneID" id="54610"/>
<dbReference type="KEGG" id="mmu:54610"/>
<dbReference type="UCSC" id="uc007atg.3">
    <property type="organism name" value="mouse"/>
</dbReference>
<dbReference type="AGR" id="MGI:1927225"/>
<dbReference type="CTD" id="11138"/>
<dbReference type="MGI" id="MGI:1927225">
    <property type="gene designation" value="Tbc1d8"/>
</dbReference>
<dbReference type="VEuPathDB" id="HostDB:ENSMUSG00000003134"/>
<dbReference type="eggNOG" id="KOG4347">
    <property type="taxonomic scope" value="Eukaryota"/>
</dbReference>
<dbReference type="GeneTree" id="ENSGT00940000158977"/>
<dbReference type="InParanoid" id="Q9Z1A9"/>
<dbReference type="OMA" id="GSEVYWA"/>
<dbReference type="OrthoDB" id="17687at2759"/>
<dbReference type="PhylomeDB" id="Q9Z1A9"/>
<dbReference type="TreeFam" id="TF313145"/>
<dbReference type="BioGRID-ORCS" id="54610">
    <property type="hits" value="5 hits in 79 CRISPR screens"/>
</dbReference>
<dbReference type="ChiTaRS" id="Tbc1d8">
    <property type="organism name" value="mouse"/>
</dbReference>
<dbReference type="PRO" id="PR:Q9Z1A9"/>
<dbReference type="Proteomes" id="UP000000589">
    <property type="component" value="Chromosome 1"/>
</dbReference>
<dbReference type="RNAct" id="Q9Z1A9">
    <property type="molecule type" value="protein"/>
</dbReference>
<dbReference type="Bgee" id="ENSMUSG00000003134">
    <property type="expression patterns" value="Expressed in caudate-putamen and 263 other cell types or tissues"/>
</dbReference>
<dbReference type="ExpressionAtlas" id="Q9Z1A9">
    <property type="expression patterns" value="baseline and differential"/>
</dbReference>
<dbReference type="GO" id="GO:0005096">
    <property type="term" value="F:GTPase activator activity"/>
    <property type="evidence" value="ECO:0007669"/>
    <property type="project" value="UniProtKB-KW"/>
</dbReference>
<dbReference type="CDD" id="cd13349">
    <property type="entry name" value="PH-GRAM1_TBC1D8"/>
    <property type="match status" value="1"/>
</dbReference>
<dbReference type="CDD" id="cd13353">
    <property type="entry name" value="PH-GRAM2_TBC1D8"/>
    <property type="match status" value="1"/>
</dbReference>
<dbReference type="FunFam" id="2.30.29.30:FF:000013">
    <property type="entry name" value="Putative TBC1 domain family member 8B"/>
    <property type="match status" value="1"/>
</dbReference>
<dbReference type="FunFam" id="2.30.29.30:FF:000259">
    <property type="entry name" value="TBC1 domain family member 8"/>
    <property type="match status" value="1"/>
</dbReference>
<dbReference type="FunFam" id="1.10.238.10:FF:000153">
    <property type="entry name" value="TBC1 domain family member 8 isoform X2"/>
    <property type="match status" value="1"/>
</dbReference>
<dbReference type="FunFam" id="1.10.472.80:FF:000030">
    <property type="entry name" value="TBC1 domain family member 8 isoform X2"/>
    <property type="match status" value="1"/>
</dbReference>
<dbReference type="FunFam" id="1.10.8.270:FF:000002">
    <property type="entry name" value="TBC1 domain family member 9B"/>
    <property type="match status" value="1"/>
</dbReference>
<dbReference type="Gene3D" id="1.10.238.10">
    <property type="entry name" value="EF-hand"/>
    <property type="match status" value="1"/>
</dbReference>
<dbReference type="Gene3D" id="2.30.29.30">
    <property type="entry name" value="Pleckstrin-homology domain (PH domain)/Phosphotyrosine-binding domain (PTB)"/>
    <property type="match status" value="2"/>
</dbReference>
<dbReference type="Gene3D" id="1.10.8.270">
    <property type="entry name" value="putative rabgap domain of human tbc1 domain family member 14 like domains"/>
    <property type="match status" value="1"/>
</dbReference>
<dbReference type="Gene3D" id="1.10.10.750">
    <property type="entry name" value="Ypt/Rab-GAP domain of gyp1p, domain 1"/>
    <property type="match status" value="1"/>
</dbReference>
<dbReference type="Gene3D" id="1.10.472.80">
    <property type="entry name" value="Ypt/Rab-GAP domain of gyp1p, domain 3"/>
    <property type="match status" value="1"/>
</dbReference>
<dbReference type="InterPro" id="IPR011992">
    <property type="entry name" value="EF-hand-dom_pair"/>
</dbReference>
<dbReference type="InterPro" id="IPR004182">
    <property type="entry name" value="GRAM"/>
</dbReference>
<dbReference type="InterPro" id="IPR011993">
    <property type="entry name" value="PH-like_dom_sf"/>
</dbReference>
<dbReference type="InterPro" id="IPR000195">
    <property type="entry name" value="Rab-GAP-TBC_dom"/>
</dbReference>
<dbReference type="InterPro" id="IPR035969">
    <property type="entry name" value="Rab-GAP_TBC_sf"/>
</dbReference>
<dbReference type="InterPro" id="IPR036009">
    <property type="entry name" value="TBC1D8_PH-GRAM1"/>
</dbReference>
<dbReference type="InterPro" id="IPR036016">
    <property type="entry name" value="TBC1D8_PH-GRAM2"/>
</dbReference>
<dbReference type="PANTHER" id="PTHR47666">
    <property type="entry name" value="PROTEIN VASCULAR ASSOCIATED DEATH 1, CHLOROPLASTIC"/>
    <property type="match status" value="1"/>
</dbReference>
<dbReference type="PANTHER" id="PTHR47666:SF2">
    <property type="entry name" value="TBC1 DOMAIN FAMILY MEMBER 8 ISOFORM X1"/>
    <property type="match status" value="1"/>
</dbReference>
<dbReference type="Pfam" id="PF02893">
    <property type="entry name" value="GRAM"/>
    <property type="match status" value="2"/>
</dbReference>
<dbReference type="Pfam" id="PF00566">
    <property type="entry name" value="RabGAP-TBC"/>
    <property type="match status" value="1"/>
</dbReference>
<dbReference type="SMART" id="SM00568">
    <property type="entry name" value="GRAM"/>
    <property type="match status" value="2"/>
</dbReference>
<dbReference type="SMART" id="SM00164">
    <property type="entry name" value="TBC"/>
    <property type="match status" value="1"/>
</dbReference>
<dbReference type="SUPFAM" id="SSF47473">
    <property type="entry name" value="EF-hand"/>
    <property type="match status" value="1"/>
</dbReference>
<dbReference type="SUPFAM" id="SSF47923">
    <property type="entry name" value="Ypt/Rab-GAP domain of gyp1p"/>
    <property type="match status" value="2"/>
</dbReference>
<dbReference type="PROSITE" id="PS50086">
    <property type="entry name" value="TBC_RABGAP"/>
    <property type="match status" value="1"/>
</dbReference>
<accession>Q9Z1A9</accession>
<accession>Q3TRZ8</accession>
<accession>Q3URH3</accession>
<accession>Q3UU99</accession>
<accession>Q6P1G8</accession>
<gene>
    <name type="primary">Tbc1d8</name>
    <name type="synonym">Hblp1</name>
    <name type="synonym">Vrp</name>
</gene>
<protein>
    <recommendedName>
        <fullName>TBC1 domain family member 8</fullName>
    </recommendedName>
    <alternativeName>
        <fullName>BUB2-like protein 1</fullName>
    </alternativeName>
    <alternativeName>
        <fullName>Vascular Rab-GAP/TBC-containing protein</fullName>
    </alternativeName>
</protein>
<feature type="chain" id="PRO_0000208034" description="TBC1 domain family member 8">
    <location>
        <begin position="1"/>
        <end position="1134"/>
    </location>
</feature>
<feature type="domain" description="GRAM 1">
    <location>
        <begin position="145"/>
        <end position="212"/>
    </location>
</feature>
<feature type="domain" description="GRAM 2">
    <location>
        <begin position="285"/>
        <end position="353"/>
    </location>
</feature>
<feature type="domain" description="Rab-GAP TBC" evidence="2">
    <location>
        <begin position="504"/>
        <end position="691"/>
    </location>
</feature>
<feature type="region of interest" description="Disordered" evidence="3">
    <location>
        <begin position="433"/>
        <end position="466"/>
    </location>
</feature>
<feature type="region of interest" description="Disordered" evidence="3">
    <location>
        <begin position="1034"/>
        <end position="1070"/>
    </location>
</feature>
<feature type="compositionally biased region" description="Basic and acidic residues" evidence="3">
    <location>
        <begin position="437"/>
        <end position="447"/>
    </location>
</feature>
<feature type="compositionally biased region" description="Polar residues" evidence="3">
    <location>
        <begin position="455"/>
        <end position="466"/>
    </location>
</feature>
<feature type="site" description="Arginine finger" evidence="1">
    <location>
        <position position="551"/>
    </location>
</feature>
<feature type="site" description="Glutamine finger" evidence="1">
    <location>
        <position position="590"/>
    </location>
</feature>
<feature type="sequence conflict" description="In Ref. 1; BAE36878." evidence="4" ref="1">
    <original>I</original>
    <variation>F</variation>
    <location>
        <position position="349"/>
    </location>
</feature>
<feature type="sequence conflict" description="In Ref. 1; BAE24715." evidence="4" ref="1">
    <original>A</original>
    <variation>D</variation>
    <location>
        <position position="705"/>
    </location>
</feature>
<feature type="sequence conflict" description="In Ref. 1; BAE36878." evidence="4" ref="1">
    <original>K</original>
    <variation>N</variation>
    <location>
        <position position="824"/>
    </location>
</feature>
<organism>
    <name type="scientific">Mus musculus</name>
    <name type="common">Mouse</name>
    <dbReference type="NCBI Taxonomy" id="10090"/>
    <lineage>
        <taxon>Eukaryota</taxon>
        <taxon>Metazoa</taxon>
        <taxon>Chordata</taxon>
        <taxon>Craniata</taxon>
        <taxon>Vertebrata</taxon>
        <taxon>Euteleostomi</taxon>
        <taxon>Mammalia</taxon>
        <taxon>Eutheria</taxon>
        <taxon>Euarchontoglires</taxon>
        <taxon>Glires</taxon>
        <taxon>Rodentia</taxon>
        <taxon>Myomorpha</taxon>
        <taxon>Muroidea</taxon>
        <taxon>Muridae</taxon>
        <taxon>Murinae</taxon>
        <taxon>Mus</taxon>
        <taxon>Mus</taxon>
    </lineage>
</organism>
<proteinExistence type="evidence at protein level"/>
<evidence type="ECO:0000250" key="1"/>
<evidence type="ECO:0000255" key="2">
    <source>
        <dbReference type="PROSITE-ProRule" id="PRU00163"/>
    </source>
</evidence>
<evidence type="ECO:0000256" key="3">
    <source>
        <dbReference type="SAM" id="MobiDB-lite"/>
    </source>
</evidence>
<evidence type="ECO:0000305" key="4"/>